<keyword id="KW-0077">Bacteriochlorophyll biosynthesis</keyword>
<keyword id="KW-0149">Chlorophyll biosynthesis</keyword>
<keyword id="KW-0602">Photosynthesis</keyword>
<keyword id="KW-1185">Reference proteome</keyword>
<proteinExistence type="inferred from homology"/>
<dbReference type="EMBL" id="L25894">
    <property type="protein sequence ID" value="AAD15241.1"/>
    <property type="molecule type" value="Genomic_DNA"/>
</dbReference>
<dbReference type="EMBL" id="AF195122">
    <property type="protein sequence ID" value="AAF24300.1"/>
    <property type="molecule type" value="Genomic_DNA"/>
</dbReference>
<dbReference type="EMBL" id="CP000143">
    <property type="protein sequence ID" value="ABA79433.1"/>
    <property type="molecule type" value="Genomic_DNA"/>
</dbReference>
<dbReference type="EMBL" id="M15105">
    <property type="status" value="NOT_ANNOTATED_CDS"/>
    <property type="molecule type" value="Genomic_DNA"/>
</dbReference>
<dbReference type="PIR" id="T50756">
    <property type="entry name" value="T50756"/>
</dbReference>
<dbReference type="RefSeq" id="WP_009565703.1">
    <property type="nucleotide sequence ID" value="NZ_CP030271.1"/>
</dbReference>
<dbReference type="RefSeq" id="YP_353334.1">
    <property type="nucleotide sequence ID" value="NC_007493.2"/>
</dbReference>
<dbReference type="STRING" id="272943.RSP_0259"/>
<dbReference type="EnsemblBacteria" id="ABA79433">
    <property type="protein sequence ID" value="ABA79433"/>
    <property type="gene ID" value="RSP_0259"/>
</dbReference>
<dbReference type="GeneID" id="67446993"/>
<dbReference type="KEGG" id="rsp:RSP_0259"/>
<dbReference type="PATRIC" id="fig|272943.9.peg.2203"/>
<dbReference type="eggNOG" id="ENOG5033GAV">
    <property type="taxonomic scope" value="Bacteria"/>
</dbReference>
<dbReference type="OrthoDB" id="7872505at2"/>
<dbReference type="Proteomes" id="UP000002703">
    <property type="component" value="Chromosome 1"/>
</dbReference>
<dbReference type="GO" id="GO:0030494">
    <property type="term" value="P:bacteriochlorophyll biosynthetic process"/>
    <property type="evidence" value="ECO:0007669"/>
    <property type="project" value="UniProtKB-KW"/>
</dbReference>
<dbReference type="GO" id="GO:0015979">
    <property type="term" value="P:photosynthesis"/>
    <property type="evidence" value="ECO:0007669"/>
    <property type="project" value="UniProtKB-KW"/>
</dbReference>
<dbReference type="InterPro" id="IPR008800">
    <property type="entry name" value="PufQ_cyt-su"/>
</dbReference>
<dbReference type="Pfam" id="PF05398">
    <property type="entry name" value="PufQ"/>
    <property type="match status" value="1"/>
</dbReference>
<dbReference type="PIRSF" id="PIRSF005825">
    <property type="entry name" value="PufQ"/>
    <property type="match status" value="1"/>
</dbReference>
<evidence type="ECO:0000305" key="1"/>
<gene>
    <name type="primary">pufQ</name>
    <name type="ordered locus">RHOS4_18650</name>
    <name type="ORF">RSP_0259</name>
</gene>
<accession>Q3J1A1</accession>
<accession>P16069</accession>
<comment type="function">
    <text>Required for bacteriochlorophyll biosynthesis. Directly involved in the assembly of both the B875 and B800-850 pigment-protein complexes.</text>
</comment>
<comment type="similarity">
    <text evidence="1">Belongs to the PufQ family.</text>
</comment>
<reference key="1">
    <citation type="journal article" date="1994" name="J. Bacteriol.">
        <title>The Q gene of Rhodobacter sphaeroides: its role in puf operon expression and spectral complex assembly.</title>
        <authorList>
            <person name="Gong L."/>
            <person name="Lee J.K."/>
            <person name="Kaplan S."/>
        </authorList>
    </citation>
    <scope>NUCLEOTIDE SEQUENCE [GENOMIC DNA]</scope>
</reference>
<reference key="2">
    <citation type="journal article" date="2000" name="Nucleic Acids Res.">
        <title>DNA sequence analysis of the photosynthesis region of Rhodobacter sphaeroides 2.4.1.</title>
        <authorList>
            <person name="Choudhary M."/>
            <person name="Kaplan S."/>
        </authorList>
    </citation>
    <scope>NUCLEOTIDE SEQUENCE [GENOMIC DNA]</scope>
</reference>
<reference key="3">
    <citation type="submission" date="2005-09" db="EMBL/GenBank/DDBJ databases">
        <title>Complete sequence of chromosome 1 of Rhodobacter sphaeroides 2.4.1.</title>
        <authorList>
            <person name="Copeland A."/>
            <person name="Lucas S."/>
            <person name="Lapidus A."/>
            <person name="Barry K."/>
            <person name="Detter J.C."/>
            <person name="Glavina T."/>
            <person name="Hammon N."/>
            <person name="Israni S."/>
            <person name="Pitluck S."/>
            <person name="Richardson P."/>
            <person name="Mackenzie C."/>
            <person name="Choudhary M."/>
            <person name="Larimer F."/>
            <person name="Hauser L.J."/>
            <person name="Land M."/>
            <person name="Donohue T.J."/>
            <person name="Kaplan S."/>
        </authorList>
    </citation>
    <scope>NUCLEOTIDE SEQUENCE [LARGE SCALE GENOMIC DNA]</scope>
    <source>
        <strain>ATCC 17023 / DSM 158 / JCM 6121 / CCUG 31486 / LMG 2827 / NBRC 12203 / NCIMB 8253 / ATH 2.4.1.</strain>
    </source>
</reference>
<reference key="4">
    <citation type="journal article" date="1987" name="J. Bacteriol.">
        <title>DNA sequence and in vitro expression of the B875 light-harvesting polypeptides of Rhodobacter sphaeroides.</title>
        <authorList>
            <person name="Kiley P.J."/>
            <person name="Donohue T.J."/>
            <person name="Havelka W.A."/>
            <person name="Kaplan S."/>
        </authorList>
    </citation>
    <scope>NUCLEOTIDE SEQUENCE [GENOMIC DNA] OF 44-77</scope>
</reference>
<name>PUFQ_CERS4</name>
<feature type="chain" id="PRO_0000097102" description="Protein PufQ">
    <location>
        <begin position="1"/>
        <end position="77"/>
    </location>
</feature>
<organism>
    <name type="scientific">Cereibacter sphaeroides (strain ATCC 17023 / DSM 158 / JCM 6121 / CCUG 31486 / LMG 2827 / NBRC 12203 / NCIMB 8253 / ATH 2.4.1.)</name>
    <name type="common">Rhodobacter sphaeroides</name>
    <dbReference type="NCBI Taxonomy" id="272943"/>
    <lineage>
        <taxon>Bacteria</taxon>
        <taxon>Pseudomonadati</taxon>
        <taxon>Pseudomonadota</taxon>
        <taxon>Alphaproteobacteria</taxon>
        <taxon>Rhodobacterales</taxon>
        <taxon>Paracoccaceae</taxon>
        <taxon>Cereibacter</taxon>
    </lineage>
</organism>
<sequence length="77" mass="8656">MSDHAVNTPVHAARAHGHRAPRAEFYVYFAVILLGAFPVAFVSWIVSTIRHRRLPKRGPFASAWFDAKAITPLIFRA</sequence>
<protein>
    <recommendedName>
        <fullName>Protein PufQ</fullName>
    </recommendedName>
</protein>